<comment type="catalytic activity">
    <reaction evidence="1">
        <text>1-(5-phospho-beta-D-ribosyl)-5-[(5-phospho-beta-D-ribosylamino)methylideneamino]imidazole-4-carboxamide = 5-[(5-phospho-1-deoxy-D-ribulos-1-ylimino)methylamino]-1-(5-phospho-beta-D-ribosyl)imidazole-4-carboxamide</text>
        <dbReference type="Rhea" id="RHEA:15469"/>
        <dbReference type="ChEBI" id="CHEBI:58435"/>
        <dbReference type="ChEBI" id="CHEBI:58525"/>
        <dbReference type="EC" id="5.3.1.16"/>
    </reaction>
</comment>
<comment type="pathway">
    <text evidence="1">Amino-acid biosynthesis; L-histidine biosynthesis; L-histidine from 5-phospho-alpha-D-ribose 1-diphosphate: step 4/9.</text>
</comment>
<comment type="subcellular location">
    <subcellularLocation>
        <location evidence="1">Cytoplasm</location>
    </subcellularLocation>
</comment>
<comment type="similarity">
    <text evidence="1">Belongs to the HisA/HisF family.</text>
</comment>
<keyword id="KW-0028">Amino-acid biosynthesis</keyword>
<keyword id="KW-0963">Cytoplasm</keyword>
<keyword id="KW-0368">Histidine biosynthesis</keyword>
<keyword id="KW-0413">Isomerase</keyword>
<keyword id="KW-1185">Reference proteome</keyword>
<evidence type="ECO:0000255" key="1">
    <source>
        <dbReference type="HAMAP-Rule" id="MF_01014"/>
    </source>
</evidence>
<accession>A1BDS2</accession>
<feature type="chain" id="PRO_0000290462" description="1-(5-phosphoribosyl)-5-[(5-phosphoribosylamino)methylideneamino] imidazole-4-carboxamide isomerase">
    <location>
        <begin position="1"/>
        <end position="256"/>
    </location>
</feature>
<feature type="active site" description="Proton acceptor" evidence="1">
    <location>
        <position position="8"/>
    </location>
</feature>
<feature type="active site" description="Proton donor" evidence="1">
    <location>
        <position position="130"/>
    </location>
</feature>
<organism>
    <name type="scientific">Chlorobium phaeobacteroides (strain DSM 266 / SMG 266 / 2430)</name>
    <dbReference type="NCBI Taxonomy" id="290317"/>
    <lineage>
        <taxon>Bacteria</taxon>
        <taxon>Pseudomonadati</taxon>
        <taxon>Chlorobiota</taxon>
        <taxon>Chlorobiia</taxon>
        <taxon>Chlorobiales</taxon>
        <taxon>Chlorobiaceae</taxon>
        <taxon>Chlorobium/Pelodictyon group</taxon>
        <taxon>Chlorobium</taxon>
    </lineage>
</organism>
<sequence>MLIIPAIDIKDGRCVRLTRGDFNQQKIYLDNPCDMAIIWRKQNAKMLHVVDLDAALTGEMVNFLKIEQIVRELDIPLQVGGGIRSLDAVKRYLDIGVGRVVIGSAAVTNPGLIEEVLKIYRPSKIVVGIDAENGIPKIKGWTESCGMKDYELGLEMKQMGIERVVYTDISKDGMMQGFGYESTKRFAEMTGMKVTASGGVTSSDDLMKLVGLQQYGVDSVIIGKALYECNFPCQELWYNFEEDICIDHNFSTARKK</sequence>
<protein>
    <recommendedName>
        <fullName evidence="1">1-(5-phosphoribosyl)-5-[(5-phosphoribosylamino)methylideneamino] imidazole-4-carboxamide isomerase</fullName>
        <ecNumber evidence="1">5.3.1.16</ecNumber>
    </recommendedName>
    <alternativeName>
        <fullName evidence="1">Phosphoribosylformimino-5-aminoimidazole carboxamide ribotide isomerase</fullName>
    </alternativeName>
</protein>
<dbReference type="EC" id="5.3.1.16" evidence="1"/>
<dbReference type="EMBL" id="CP000492">
    <property type="protein sequence ID" value="ABL64549.1"/>
    <property type="molecule type" value="Genomic_DNA"/>
</dbReference>
<dbReference type="RefSeq" id="WP_011744382.1">
    <property type="nucleotide sequence ID" value="NC_008639.1"/>
</dbReference>
<dbReference type="SMR" id="A1BDS2"/>
<dbReference type="STRING" id="290317.Cpha266_0492"/>
<dbReference type="KEGG" id="cph:Cpha266_0492"/>
<dbReference type="eggNOG" id="COG0106">
    <property type="taxonomic scope" value="Bacteria"/>
</dbReference>
<dbReference type="HOGENOM" id="CLU_048577_1_2_10"/>
<dbReference type="OrthoDB" id="9807749at2"/>
<dbReference type="UniPathway" id="UPA00031">
    <property type="reaction ID" value="UER00009"/>
</dbReference>
<dbReference type="Proteomes" id="UP000008701">
    <property type="component" value="Chromosome"/>
</dbReference>
<dbReference type="GO" id="GO:0005737">
    <property type="term" value="C:cytoplasm"/>
    <property type="evidence" value="ECO:0007669"/>
    <property type="project" value="UniProtKB-SubCell"/>
</dbReference>
<dbReference type="GO" id="GO:0003949">
    <property type="term" value="F:1-(5-phosphoribosyl)-5-[(5-phosphoribosylamino)methylideneamino]imidazole-4-carboxamide isomerase activity"/>
    <property type="evidence" value="ECO:0007669"/>
    <property type="project" value="UniProtKB-UniRule"/>
</dbReference>
<dbReference type="GO" id="GO:0000105">
    <property type="term" value="P:L-histidine biosynthetic process"/>
    <property type="evidence" value="ECO:0007669"/>
    <property type="project" value="UniProtKB-UniRule"/>
</dbReference>
<dbReference type="GO" id="GO:0000162">
    <property type="term" value="P:L-tryptophan biosynthetic process"/>
    <property type="evidence" value="ECO:0007669"/>
    <property type="project" value="TreeGrafter"/>
</dbReference>
<dbReference type="CDD" id="cd04732">
    <property type="entry name" value="HisA"/>
    <property type="match status" value="1"/>
</dbReference>
<dbReference type="FunFam" id="3.20.20.70:FF:000009">
    <property type="entry name" value="1-(5-phosphoribosyl)-5-[(5-phosphoribosylamino)methylideneamino] imidazole-4-carboxamide isomerase"/>
    <property type="match status" value="1"/>
</dbReference>
<dbReference type="Gene3D" id="3.20.20.70">
    <property type="entry name" value="Aldolase class I"/>
    <property type="match status" value="1"/>
</dbReference>
<dbReference type="HAMAP" id="MF_01014">
    <property type="entry name" value="HisA"/>
    <property type="match status" value="1"/>
</dbReference>
<dbReference type="InterPro" id="IPR013785">
    <property type="entry name" value="Aldolase_TIM"/>
</dbReference>
<dbReference type="InterPro" id="IPR006062">
    <property type="entry name" value="His_biosynth"/>
</dbReference>
<dbReference type="InterPro" id="IPR006063">
    <property type="entry name" value="HisA_bact_arch"/>
</dbReference>
<dbReference type="InterPro" id="IPR044524">
    <property type="entry name" value="Isoase_HisA-like"/>
</dbReference>
<dbReference type="InterPro" id="IPR023016">
    <property type="entry name" value="Isoase_HisA-like_bact"/>
</dbReference>
<dbReference type="InterPro" id="IPR011060">
    <property type="entry name" value="RibuloseP-bd_barrel"/>
</dbReference>
<dbReference type="NCBIfam" id="TIGR00007">
    <property type="entry name" value="1-(5-phosphoribosyl)-5-[(5-phosphoribosylamino)methylideneamino]imidazole-4-carboxamide isomerase"/>
    <property type="match status" value="1"/>
</dbReference>
<dbReference type="PANTHER" id="PTHR43090">
    <property type="entry name" value="1-(5-PHOSPHORIBOSYL)-5-[(5-PHOSPHORIBOSYLAMINO)METHYLIDENEAMINO] IMIDAZOLE-4-CARBOXAMIDE ISOMERASE"/>
    <property type="match status" value="1"/>
</dbReference>
<dbReference type="PANTHER" id="PTHR43090:SF2">
    <property type="entry name" value="1-(5-PHOSPHORIBOSYL)-5-[(5-PHOSPHORIBOSYLAMINO)METHYLIDENEAMINO] IMIDAZOLE-4-CARBOXAMIDE ISOMERASE"/>
    <property type="match status" value="1"/>
</dbReference>
<dbReference type="Pfam" id="PF00977">
    <property type="entry name" value="His_biosynth"/>
    <property type="match status" value="1"/>
</dbReference>
<dbReference type="SUPFAM" id="SSF51366">
    <property type="entry name" value="Ribulose-phoshate binding barrel"/>
    <property type="match status" value="1"/>
</dbReference>
<proteinExistence type="inferred from homology"/>
<name>HIS4_CHLPD</name>
<gene>
    <name evidence="1" type="primary">hisA</name>
    <name type="ordered locus">Cpha266_0492</name>
</gene>
<reference key="1">
    <citation type="submission" date="2006-12" db="EMBL/GenBank/DDBJ databases">
        <title>Complete sequence of Chlorobium phaeobacteroides DSM 266.</title>
        <authorList>
            <consortium name="US DOE Joint Genome Institute"/>
            <person name="Copeland A."/>
            <person name="Lucas S."/>
            <person name="Lapidus A."/>
            <person name="Barry K."/>
            <person name="Detter J.C."/>
            <person name="Glavina del Rio T."/>
            <person name="Hammon N."/>
            <person name="Israni S."/>
            <person name="Pitluck S."/>
            <person name="Goltsman E."/>
            <person name="Schmutz J."/>
            <person name="Larimer F."/>
            <person name="Land M."/>
            <person name="Hauser L."/>
            <person name="Mikhailova N."/>
            <person name="Li T."/>
            <person name="Overmann J."/>
            <person name="Bryant D.A."/>
            <person name="Richardson P."/>
        </authorList>
    </citation>
    <scope>NUCLEOTIDE SEQUENCE [LARGE SCALE GENOMIC DNA]</scope>
    <source>
        <strain>DSM 266 / SMG 266 / 2430</strain>
    </source>
</reference>